<sequence>MTLKIDIKGRGKYKPASDYSIDDVKNVLMEKIFEESSRIINSDDDLEIIEKVDFRTDKINVLSLFSGCGGLDLGFELAGLAAVIGEQAAMEAFKDKDRFNELRNKSIFHTIYTNDLFKEANQTYKTNFPGHVIQHEKDIRQVKYFPKCNLILGGFPCPGFSEAGPRLIDDDRNFLYLHFIRSLIQAQPEIFVAENVKGMMTLGKGEVLNQIIEDFASAGYRVQFKLLNARDYGVPQLRERVIIEGVRKDISFNYKYPSPTHGEETGLKPFKTLRDSIGDLVTDPGPYFTGSYSSIYMSRNRKKSWDEQSFTIQASGRQAPLHPGGLSMKKIGKDKWVFPDGEENHRRLSVKEIARVQTFPDWFQFSQGTNSQTSINNRLDKQYKQIGNAVPVLLAKAVASPIANWAINYLESSPNNKIKNRERKLSIRTFLRIKTS</sequence>
<evidence type="ECO:0000255" key="1">
    <source>
        <dbReference type="PROSITE-ProRule" id="PRU01016"/>
    </source>
</evidence>
<evidence type="ECO:0000255" key="2">
    <source>
        <dbReference type="PROSITE-ProRule" id="PRU10018"/>
    </source>
</evidence>
<evidence type="ECO:0000269" key="3">
    <source>
    </source>
</evidence>
<evidence type="ECO:0000303" key="4">
    <source>
    </source>
</evidence>
<evidence type="ECO:0000305" key="5">
    <source>
    </source>
</evidence>
<protein>
    <recommendedName>
        <fullName evidence="4">Type II methyltransferase M.BsuRI</fullName>
        <shortName evidence="4">M.BsuRI</shortName>
        <ecNumber>2.1.1.37</ecNumber>
    </recommendedName>
    <alternativeName>
        <fullName>Cytosine-specific methyltransferase BsuRI</fullName>
    </alternativeName>
    <alternativeName>
        <fullName>Modification methylase BsuRI</fullName>
    </alternativeName>
</protein>
<organism>
    <name type="scientific">Bacillus subtilis</name>
    <dbReference type="NCBI Taxonomy" id="1423"/>
    <lineage>
        <taxon>Bacteria</taxon>
        <taxon>Bacillati</taxon>
        <taxon>Bacillota</taxon>
        <taxon>Bacilli</taxon>
        <taxon>Bacillales</taxon>
        <taxon>Bacillaceae</taxon>
        <taxon>Bacillus</taxon>
    </lineage>
</organism>
<proteinExistence type="evidence at protein level"/>
<keyword id="KW-0238">DNA-binding</keyword>
<keyword id="KW-0489">Methyltransferase</keyword>
<keyword id="KW-0680">Restriction system</keyword>
<keyword id="KW-0949">S-adenosyl-L-methionine</keyword>
<keyword id="KW-0808">Transferase</keyword>
<gene>
    <name type="primary">hsdRM</name>
    <name type="synonym">hsdM</name>
</gene>
<accession>P06530</accession>
<comment type="function">
    <text evidence="3 4">A methylase, recognizes the double-stranded sequence 5'-GGCC-3', methylates C-3 on both strands, and protects the DNA from cleavage by the BsuRI endonuclease.</text>
</comment>
<comment type="catalytic activity">
    <reaction evidence="2">
        <text>a 2'-deoxycytidine in DNA + S-adenosyl-L-methionine = a 5-methyl-2'-deoxycytidine in DNA + S-adenosyl-L-homocysteine + H(+)</text>
        <dbReference type="Rhea" id="RHEA:13681"/>
        <dbReference type="Rhea" id="RHEA-COMP:11369"/>
        <dbReference type="Rhea" id="RHEA-COMP:11370"/>
        <dbReference type="ChEBI" id="CHEBI:15378"/>
        <dbReference type="ChEBI" id="CHEBI:57856"/>
        <dbReference type="ChEBI" id="CHEBI:59789"/>
        <dbReference type="ChEBI" id="CHEBI:85452"/>
        <dbReference type="ChEBI" id="CHEBI:85454"/>
        <dbReference type="EC" id="2.1.1.37"/>
    </reaction>
</comment>
<comment type="subunit">
    <text evidence="5">Monomer.</text>
</comment>
<comment type="similarity">
    <text evidence="1">Belongs to the class I-like SAM-binding methyltransferase superfamily. C5-methyltransferase family.</text>
</comment>
<dbReference type="EC" id="2.1.1.37"/>
<dbReference type="EMBL" id="X02988">
    <property type="protein sequence ID" value="CAA26731.1"/>
    <property type="molecule type" value="Genomic_DNA"/>
</dbReference>
<dbReference type="PIR" id="B23488">
    <property type="entry name" value="XYBSR1"/>
</dbReference>
<dbReference type="SMR" id="P06530"/>
<dbReference type="REBASE" id="3340">
    <property type="entry name" value="M.BsuRI"/>
</dbReference>
<dbReference type="PRO" id="PR:P06530"/>
<dbReference type="GO" id="GO:0003886">
    <property type="term" value="F:DNA (cytosine-5-)-methyltransferase activity"/>
    <property type="evidence" value="ECO:0007669"/>
    <property type="project" value="UniProtKB-EC"/>
</dbReference>
<dbReference type="GO" id="GO:0003677">
    <property type="term" value="F:DNA binding"/>
    <property type="evidence" value="ECO:0007669"/>
    <property type="project" value="UniProtKB-KW"/>
</dbReference>
<dbReference type="GO" id="GO:0009307">
    <property type="term" value="P:DNA restriction-modification system"/>
    <property type="evidence" value="ECO:0007669"/>
    <property type="project" value="UniProtKB-KW"/>
</dbReference>
<dbReference type="GO" id="GO:0032259">
    <property type="term" value="P:methylation"/>
    <property type="evidence" value="ECO:0007669"/>
    <property type="project" value="UniProtKB-KW"/>
</dbReference>
<dbReference type="GO" id="GO:0044027">
    <property type="term" value="P:negative regulation of gene expression via chromosomal CpG island methylation"/>
    <property type="evidence" value="ECO:0007669"/>
    <property type="project" value="TreeGrafter"/>
</dbReference>
<dbReference type="CDD" id="cd00315">
    <property type="entry name" value="Cyt_C5_DNA_methylase"/>
    <property type="match status" value="1"/>
</dbReference>
<dbReference type="Gene3D" id="3.90.120.10">
    <property type="entry name" value="DNA Methylase, subunit A, domain 2"/>
    <property type="match status" value="1"/>
</dbReference>
<dbReference type="Gene3D" id="3.40.50.150">
    <property type="entry name" value="Vaccinia Virus protein VP39"/>
    <property type="match status" value="1"/>
</dbReference>
<dbReference type="InterPro" id="IPR050390">
    <property type="entry name" value="C5-Methyltransferase"/>
</dbReference>
<dbReference type="InterPro" id="IPR018117">
    <property type="entry name" value="C5_DNA_meth_AS"/>
</dbReference>
<dbReference type="InterPro" id="IPR001525">
    <property type="entry name" value="C5_MeTfrase"/>
</dbReference>
<dbReference type="InterPro" id="IPR031303">
    <property type="entry name" value="C5_meth_CS"/>
</dbReference>
<dbReference type="InterPro" id="IPR029063">
    <property type="entry name" value="SAM-dependent_MTases_sf"/>
</dbReference>
<dbReference type="NCBIfam" id="TIGR00675">
    <property type="entry name" value="dcm"/>
    <property type="match status" value="1"/>
</dbReference>
<dbReference type="PANTHER" id="PTHR10629">
    <property type="entry name" value="CYTOSINE-SPECIFIC METHYLTRANSFERASE"/>
    <property type="match status" value="1"/>
</dbReference>
<dbReference type="PANTHER" id="PTHR10629:SF52">
    <property type="entry name" value="DNA (CYTOSINE-5)-METHYLTRANSFERASE 1"/>
    <property type="match status" value="1"/>
</dbReference>
<dbReference type="Pfam" id="PF00145">
    <property type="entry name" value="DNA_methylase"/>
    <property type="match status" value="1"/>
</dbReference>
<dbReference type="PRINTS" id="PR00105">
    <property type="entry name" value="C5METTRFRASE"/>
</dbReference>
<dbReference type="SUPFAM" id="SSF53335">
    <property type="entry name" value="S-adenosyl-L-methionine-dependent methyltransferases"/>
    <property type="match status" value="1"/>
</dbReference>
<dbReference type="PROSITE" id="PS00094">
    <property type="entry name" value="C5_MTASE_1"/>
    <property type="match status" value="1"/>
</dbReference>
<dbReference type="PROSITE" id="PS00095">
    <property type="entry name" value="C5_MTASE_2"/>
    <property type="match status" value="1"/>
</dbReference>
<dbReference type="PROSITE" id="PS51679">
    <property type="entry name" value="SAM_MT_C5"/>
    <property type="match status" value="1"/>
</dbReference>
<name>MTBR_BACIU</name>
<feature type="chain" id="PRO_0000087864" description="Type II methyltransferase M.BsuRI">
    <location>
        <begin position="1"/>
        <end position="436"/>
    </location>
</feature>
<feature type="domain" description="SAM-dependent MTase C5-type" evidence="1">
    <location>
        <begin position="59"/>
        <end position="409"/>
    </location>
</feature>
<feature type="active site" evidence="1 2">
    <location>
        <position position="157"/>
    </location>
</feature>
<feature type="mutagenesis site" description="Retains methyltransferase activity." evidence="3">
    <location>
        <begin position="425"/>
        <end position="436"/>
    </location>
</feature>
<reference key="1">
    <citation type="journal article" date="1985" name="Nucleic Acids Res.">
        <title>Nucleotide sequence of the BsuRI restriction-modification system.</title>
        <authorList>
            <person name="Kiss A."/>
            <person name="Posfai G."/>
            <person name="Keller C.C."/>
            <person name="Venetianer P."/>
            <person name="Roberts R.J."/>
        </authorList>
    </citation>
    <scope>NUCLEOTIDE SEQUENCE [GENOMIC DNA]</scope>
    <scope>FUNCTION</scope>
    <scope>PROBABLE SUBUNIT</scope>
    <scope>MUTAGENESIS OF 425-LEU--SER-436</scope>
    <source>
        <strain>R</strain>
    </source>
</reference>
<reference key="2">
    <citation type="journal article" date="2003" name="Nucleic Acids Res.">
        <title>A nomenclature for restriction enzymes, DNA methyltransferases, homing endonucleases and their genes.</title>
        <authorList>
            <person name="Roberts R.J."/>
            <person name="Belfort M."/>
            <person name="Bestor T."/>
            <person name="Bhagwat A.S."/>
            <person name="Bickle T.A."/>
            <person name="Bitinaite J."/>
            <person name="Blumenthal R.M."/>
            <person name="Degtyarev S.K."/>
            <person name="Dryden D.T."/>
            <person name="Dybvig K."/>
            <person name="Firman K."/>
            <person name="Gromova E.S."/>
            <person name="Gumport R.I."/>
            <person name="Halford S.E."/>
            <person name="Hattman S."/>
            <person name="Heitman J."/>
            <person name="Hornby D.P."/>
            <person name="Janulaitis A."/>
            <person name="Jeltsch A."/>
            <person name="Josephsen J."/>
            <person name="Kiss A."/>
            <person name="Klaenhammer T.R."/>
            <person name="Kobayashi I."/>
            <person name="Kong H."/>
            <person name="Krueger D.H."/>
            <person name="Lacks S."/>
            <person name="Marinus M.G."/>
            <person name="Miyahara M."/>
            <person name="Morgan R.D."/>
            <person name="Murray N.E."/>
            <person name="Nagaraja V."/>
            <person name="Piekarowicz A."/>
            <person name="Pingoud A."/>
            <person name="Raleigh E."/>
            <person name="Rao D.N."/>
            <person name="Reich N."/>
            <person name="Repin V.E."/>
            <person name="Selker E.U."/>
            <person name="Shaw P.C."/>
            <person name="Stein D.C."/>
            <person name="Stoddard B.L."/>
            <person name="Szybalski W."/>
            <person name="Trautner T.A."/>
            <person name="Van Etten J.L."/>
            <person name="Vitor J.M."/>
            <person name="Wilson G.G."/>
            <person name="Xu S.Y."/>
        </authorList>
    </citation>
    <scope>NOMENCLATURE</scope>
</reference>